<feature type="chain" id="PRO_0000177317" description="Large ribosomal subunit protein bL35">
    <location>
        <begin position="1"/>
        <end position="65"/>
    </location>
</feature>
<gene>
    <name evidence="1" type="primary">rpmI</name>
    <name evidence="1" type="synonym">rpl35</name>
    <name type="ordered locus">asr3427</name>
</gene>
<comment type="similarity">
    <text evidence="1">Belongs to the bacterial ribosomal protein bL35 family.</text>
</comment>
<accession>Q8YRL9</accession>
<evidence type="ECO:0000255" key="1">
    <source>
        <dbReference type="HAMAP-Rule" id="MF_00514"/>
    </source>
</evidence>
<evidence type="ECO:0000305" key="2"/>
<protein>
    <recommendedName>
        <fullName evidence="1">Large ribosomal subunit protein bL35</fullName>
    </recommendedName>
    <alternativeName>
        <fullName evidence="2">50S ribosomal protein L35</fullName>
    </alternativeName>
</protein>
<dbReference type="EMBL" id="BA000019">
    <property type="protein sequence ID" value="BAB75126.1"/>
    <property type="molecule type" value="Genomic_DNA"/>
</dbReference>
<dbReference type="PIR" id="AD2234">
    <property type="entry name" value="AD2234"/>
</dbReference>
<dbReference type="RefSeq" id="WP_010997577.1">
    <property type="nucleotide sequence ID" value="NZ_RSCN01000015.1"/>
</dbReference>
<dbReference type="SMR" id="Q8YRL9"/>
<dbReference type="STRING" id="103690.gene:10495466"/>
<dbReference type="GeneID" id="58726234"/>
<dbReference type="KEGG" id="ana:asr3427"/>
<dbReference type="eggNOG" id="COG0291">
    <property type="taxonomic scope" value="Bacteria"/>
</dbReference>
<dbReference type="OrthoDB" id="47476at2"/>
<dbReference type="Proteomes" id="UP000002483">
    <property type="component" value="Chromosome"/>
</dbReference>
<dbReference type="GO" id="GO:0022625">
    <property type="term" value="C:cytosolic large ribosomal subunit"/>
    <property type="evidence" value="ECO:0007669"/>
    <property type="project" value="TreeGrafter"/>
</dbReference>
<dbReference type="GO" id="GO:0003735">
    <property type="term" value="F:structural constituent of ribosome"/>
    <property type="evidence" value="ECO:0007669"/>
    <property type="project" value="InterPro"/>
</dbReference>
<dbReference type="GO" id="GO:0006412">
    <property type="term" value="P:translation"/>
    <property type="evidence" value="ECO:0007669"/>
    <property type="project" value="UniProtKB-UniRule"/>
</dbReference>
<dbReference type="FunFam" id="4.10.410.60:FF:000001">
    <property type="entry name" value="50S ribosomal protein L35"/>
    <property type="match status" value="1"/>
</dbReference>
<dbReference type="Gene3D" id="4.10.410.60">
    <property type="match status" value="1"/>
</dbReference>
<dbReference type="HAMAP" id="MF_00514">
    <property type="entry name" value="Ribosomal_bL35"/>
    <property type="match status" value="1"/>
</dbReference>
<dbReference type="InterPro" id="IPR001706">
    <property type="entry name" value="Ribosomal_bL35"/>
</dbReference>
<dbReference type="InterPro" id="IPR021137">
    <property type="entry name" value="Ribosomal_bL35-like"/>
</dbReference>
<dbReference type="InterPro" id="IPR018265">
    <property type="entry name" value="Ribosomal_bL35_CS"/>
</dbReference>
<dbReference type="InterPro" id="IPR037229">
    <property type="entry name" value="Ribosomal_bL35_sf"/>
</dbReference>
<dbReference type="NCBIfam" id="TIGR00001">
    <property type="entry name" value="rpmI_bact"/>
    <property type="match status" value="1"/>
</dbReference>
<dbReference type="PANTHER" id="PTHR33343">
    <property type="entry name" value="54S RIBOSOMAL PROTEIN BL35M"/>
    <property type="match status" value="1"/>
</dbReference>
<dbReference type="PANTHER" id="PTHR33343:SF1">
    <property type="entry name" value="LARGE RIBOSOMAL SUBUNIT PROTEIN BL35M"/>
    <property type="match status" value="1"/>
</dbReference>
<dbReference type="Pfam" id="PF01632">
    <property type="entry name" value="Ribosomal_L35p"/>
    <property type="match status" value="1"/>
</dbReference>
<dbReference type="PRINTS" id="PR00064">
    <property type="entry name" value="RIBOSOMALL35"/>
</dbReference>
<dbReference type="SUPFAM" id="SSF143034">
    <property type="entry name" value="L35p-like"/>
    <property type="match status" value="1"/>
</dbReference>
<dbReference type="PROSITE" id="PS00936">
    <property type="entry name" value="RIBOSOMAL_L35"/>
    <property type="match status" value="1"/>
</dbReference>
<sequence>MPKLKTRKAAAKRFRATGTGKIVRRKAFKNHLLEHKTTNKKRQFSKMAIVNERDEENVRLMLPYL</sequence>
<reference key="1">
    <citation type="journal article" date="2001" name="DNA Res.">
        <title>Complete genomic sequence of the filamentous nitrogen-fixing cyanobacterium Anabaena sp. strain PCC 7120.</title>
        <authorList>
            <person name="Kaneko T."/>
            <person name="Nakamura Y."/>
            <person name="Wolk C.P."/>
            <person name="Kuritz T."/>
            <person name="Sasamoto S."/>
            <person name="Watanabe A."/>
            <person name="Iriguchi M."/>
            <person name="Ishikawa A."/>
            <person name="Kawashima K."/>
            <person name="Kimura T."/>
            <person name="Kishida Y."/>
            <person name="Kohara M."/>
            <person name="Matsumoto M."/>
            <person name="Matsuno A."/>
            <person name="Muraki A."/>
            <person name="Nakazaki N."/>
            <person name="Shimpo S."/>
            <person name="Sugimoto M."/>
            <person name="Takazawa M."/>
            <person name="Yamada M."/>
            <person name="Yasuda M."/>
            <person name="Tabata S."/>
        </authorList>
    </citation>
    <scope>NUCLEOTIDE SEQUENCE [LARGE SCALE GENOMIC DNA]</scope>
    <source>
        <strain>PCC 7120 / SAG 25.82 / UTEX 2576</strain>
    </source>
</reference>
<proteinExistence type="inferred from homology"/>
<keyword id="KW-1185">Reference proteome</keyword>
<keyword id="KW-0687">Ribonucleoprotein</keyword>
<keyword id="KW-0689">Ribosomal protein</keyword>
<organism>
    <name type="scientific">Nostoc sp. (strain PCC 7120 / SAG 25.82 / UTEX 2576)</name>
    <dbReference type="NCBI Taxonomy" id="103690"/>
    <lineage>
        <taxon>Bacteria</taxon>
        <taxon>Bacillati</taxon>
        <taxon>Cyanobacteriota</taxon>
        <taxon>Cyanophyceae</taxon>
        <taxon>Nostocales</taxon>
        <taxon>Nostocaceae</taxon>
        <taxon>Nostoc</taxon>
    </lineage>
</organism>
<name>RL35_NOSS1</name>